<proteinExistence type="evidence at protein level"/>
<feature type="signal peptide" evidence="1">
    <location>
        <begin position="1"/>
        <end position="21"/>
    </location>
</feature>
<feature type="chain" id="PRO_5004107267" description="Secreted effector CSEP0064" evidence="1">
    <location>
        <begin position="22"/>
        <end position="118"/>
    </location>
</feature>
<feature type="disulfide bond" evidence="3 6">
    <location>
        <begin position="27"/>
        <end position="113"/>
    </location>
</feature>
<feature type="strand" evidence="7">
    <location>
        <begin position="24"/>
        <end position="27"/>
    </location>
</feature>
<feature type="strand" evidence="7">
    <location>
        <begin position="30"/>
        <end position="33"/>
    </location>
</feature>
<feature type="helix" evidence="7">
    <location>
        <begin position="34"/>
        <end position="44"/>
    </location>
</feature>
<feature type="turn" evidence="7">
    <location>
        <begin position="49"/>
        <end position="51"/>
    </location>
</feature>
<feature type="strand" evidence="7">
    <location>
        <begin position="57"/>
        <end position="59"/>
    </location>
</feature>
<feature type="helix" evidence="7">
    <location>
        <begin position="66"/>
        <end position="68"/>
    </location>
</feature>
<feature type="strand" evidence="7">
    <location>
        <begin position="71"/>
        <end position="76"/>
    </location>
</feature>
<feature type="strand" evidence="7">
    <location>
        <begin position="78"/>
        <end position="81"/>
    </location>
</feature>
<feature type="strand" evidence="7">
    <location>
        <begin position="90"/>
        <end position="95"/>
    </location>
</feature>
<feature type="strand" evidence="7">
    <location>
        <begin position="98"/>
        <end position="108"/>
    </location>
</feature>
<feature type="strand" evidence="7">
    <location>
        <begin position="114"/>
        <end position="116"/>
    </location>
</feature>
<name>CSEP4_BLUG1</name>
<gene>
    <name evidence="5" type="primary">CSEP0064</name>
    <name evidence="4" type="synonym">BEC1054</name>
    <name type="ORF">BGHDH14_bgh02874</name>
</gene>
<reference key="1">
    <citation type="journal article" date="2010" name="Science">
        <title>Genome expansion and gene loss in powdery mildew fungi reveal tradeoffs in extreme parasitism.</title>
        <authorList>
            <person name="Spanu P.D."/>
            <person name="Abbott J.C."/>
            <person name="Amselem J."/>
            <person name="Burgis T.A."/>
            <person name="Soanes D.M."/>
            <person name="Stueber K."/>
            <person name="Ver Loren van Themaat E."/>
            <person name="Brown J.K.M."/>
            <person name="Butcher S.A."/>
            <person name="Gurr S.J."/>
            <person name="Lebrun M.-H."/>
            <person name="Ridout C.J."/>
            <person name="Schulze-Lefert P."/>
            <person name="Talbot N.J."/>
            <person name="Ahmadinejad N."/>
            <person name="Ametz C."/>
            <person name="Barton G.R."/>
            <person name="Benjdia M."/>
            <person name="Bidzinski P."/>
            <person name="Bindschedler L.V."/>
            <person name="Both M."/>
            <person name="Brewer M.T."/>
            <person name="Cadle-Davidson L."/>
            <person name="Cadle-Davidson M.M."/>
            <person name="Collemare J."/>
            <person name="Cramer R."/>
            <person name="Frenkel O."/>
            <person name="Godfrey D."/>
            <person name="Harriman J."/>
            <person name="Hoede C."/>
            <person name="King B.C."/>
            <person name="Klages S."/>
            <person name="Kleemann J."/>
            <person name="Knoll D."/>
            <person name="Koti P.S."/>
            <person name="Kreplak J."/>
            <person name="Lopez-Ruiz F.J."/>
            <person name="Lu X."/>
            <person name="Maekawa T."/>
            <person name="Mahanil S."/>
            <person name="Micali C."/>
            <person name="Milgroom M.G."/>
            <person name="Montana G."/>
            <person name="Noir S."/>
            <person name="O'Connell R.J."/>
            <person name="Oberhaensli S."/>
            <person name="Parlange F."/>
            <person name="Pedersen C."/>
            <person name="Quesneville H."/>
            <person name="Reinhardt R."/>
            <person name="Rott M."/>
            <person name="Sacristan S."/>
            <person name="Schmidt S.M."/>
            <person name="Schoen M."/>
            <person name="Skamnioti P."/>
            <person name="Sommer H."/>
            <person name="Stephens A."/>
            <person name="Takahara H."/>
            <person name="Thordal-Christensen H."/>
            <person name="Vigouroux M."/>
            <person name="Wessling R."/>
            <person name="Wicker T."/>
            <person name="Panstruga R."/>
        </authorList>
    </citation>
    <scope>NUCLEOTIDE SEQUENCE [LARGE SCALE GENOMIC DNA]</scope>
    <source>
        <strain>DH14</strain>
    </source>
</reference>
<reference key="2">
    <citation type="journal article" date="2013" name="Mol. Plant Microbe Interact.">
        <title>Host-induced gene silencing in barley powdery mildew reveals a class of ribonuclease-like effectors.</title>
        <authorList>
            <person name="Pliego C."/>
            <person name="Nowara D."/>
            <person name="Bonciani G."/>
            <person name="Gheorghe D.M."/>
            <person name="Xu R."/>
            <person name="Surana P."/>
            <person name="Whigham E."/>
            <person name="Nettleton D."/>
            <person name="Bogdanove A.J."/>
            <person name="Wise R.P."/>
            <person name="Schweizer P."/>
            <person name="Bindschedler L.V."/>
            <person name="Spanu P.D."/>
        </authorList>
    </citation>
    <scope>FUNCTION</scope>
    <scope>SUBCELLULAR LOCATION</scope>
</reference>
<reference evidence="6" key="3">
    <citation type="journal article" date="2019" name="PLoS Pathog.">
        <title>The fungal ribonuclease-like effector protein CSEP0064/BEC1054 represses plant immunity and interferes with degradation of host ribosomal RNA.</title>
        <authorList>
            <person name="Pennington H.G."/>
            <person name="Jones R."/>
            <person name="Kwon S."/>
            <person name="Bonciani G."/>
            <person name="Thieron H."/>
            <person name="Chandler T."/>
            <person name="Luong P."/>
            <person name="Morgan S.N."/>
            <person name="Przydacz M."/>
            <person name="Bozkurt T."/>
            <person name="Bowden S."/>
            <person name="Craze M."/>
            <person name="Wallington E.J."/>
            <person name="Garnett J."/>
            <person name="Kwaaitaal M."/>
            <person name="Panstruga R."/>
            <person name="Cota E."/>
            <person name="Spanu P.D."/>
        </authorList>
    </citation>
    <scope>X-RAY CRYSTALLOGRAPHY (1.30 ANGSTROMS) OF 21-118</scope>
    <scope>DISULFIDE BONDS</scope>
    <scope>FUNCTION</scope>
    <scope>INTERACTION WITH PR10</scope>
    <scope>RNA-BINDING</scope>
</reference>
<organism>
    <name type="scientific">Blumeria graminis f. sp. hordei (strain DH14)</name>
    <name type="common">Barley powdery mildew</name>
    <name type="synonym">Oidium monilioides f. sp. hordei</name>
    <dbReference type="NCBI Taxonomy" id="546991"/>
    <lineage>
        <taxon>Eukaryota</taxon>
        <taxon>Fungi</taxon>
        <taxon>Dikarya</taxon>
        <taxon>Ascomycota</taxon>
        <taxon>Pezizomycotina</taxon>
        <taxon>Leotiomycetes</taxon>
        <taxon>Erysiphales</taxon>
        <taxon>Erysiphaceae</taxon>
        <taxon>Blumeria</taxon>
        <taxon>Blumeria hordei</taxon>
    </lineage>
</organism>
<accession>N1JJ94</accession>
<comment type="function">
    <text evidence="2 3">Secreted effector that increases susceptibility to infection in both monocotyledonous and dicotyledonous plants (PubMed:23441578, PubMed:30856238). Non-catalytic homolog of fungal RNases that binds host RNA and inhibits the degradation of host ribosomal RNA induced by ribosome-inactivating proteins (RIPs), preventing host cell death, an inviable interaction and demise of the fungus (PubMed:30856238).</text>
</comment>
<comment type="subunit">
    <text evidence="3">Interacts in planta with the pathogenesis-related protein PR10.</text>
</comment>
<comment type="subcellular location">
    <subcellularLocation>
        <location evidence="2">Secreted</location>
    </subcellularLocation>
    <subcellularLocation>
        <location evidence="2">Host cell</location>
    </subcellularLocation>
</comment>
<protein>
    <recommendedName>
        <fullName evidence="5">Secreted effector CSEP0064</fullName>
    </recommendedName>
</protein>
<keyword id="KW-0002">3D-structure</keyword>
<keyword id="KW-1015">Disulfide bond</keyword>
<keyword id="KW-1185">Reference proteome</keyword>
<keyword id="KW-0964">Secreted</keyword>
<keyword id="KW-0732">Signal</keyword>
<keyword id="KW-0843">Virulence</keyword>
<evidence type="ECO:0000255" key="1"/>
<evidence type="ECO:0000269" key="2">
    <source>
    </source>
</evidence>
<evidence type="ECO:0000269" key="3">
    <source>
    </source>
</evidence>
<evidence type="ECO:0000303" key="4">
    <source>
    </source>
</evidence>
<evidence type="ECO:0000303" key="5">
    <source>
    </source>
</evidence>
<evidence type="ECO:0007744" key="6">
    <source>
        <dbReference type="PDB" id="6FMB"/>
    </source>
</evidence>
<evidence type="ECO:0007829" key="7">
    <source>
        <dbReference type="PDB" id="6FMB"/>
    </source>
</evidence>
<dbReference type="EMBL" id="CAUH01008659">
    <property type="protein sequence ID" value="CCU83233.1"/>
    <property type="molecule type" value="Genomic_DNA"/>
</dbReference>
<dbReference type="PDB" id="6FMB">
    <property type="method" value="X-ray"/>
    <property type="resolution" value="1.30 A"/>
    <property type="chains" value="A=21-118"/>
</dbReference>
<dbReference type="PDBsum" id="6FMB"/>
<dbReference type="SMR" id="N1JJ94"/>
<dbReference type="EnsemblFungi" id="BLGH_06959-mRNA-1">
    <property type="protein sequence ID" value="BLGH_06959-mRNA-1"/>
    <property type="gene ID" value="BLGH_06959"/>
</dbReference>
<dbReference type="HOGENOM" id="CLU_167694_0_0_1"/>
<dbReference type="InParanoid" id="N1JJ94"/>
<dbReference type="OrthoDB" id="3607364at2759"/>
<dbReference type="PHI-base" id="PHI:2903"/>
<dbReference type="PHI-base" id="PHI:8918"/>
<dbReference type="Proteomes" id="UP000015441">
    <property type="component" value="Unassembled WGS sequence"/>
</dbReference>
<dbReference type="GO" id="GO:0005576">
    <property type="term" value="C:extracellular region"/>
    <property type="evidence" value="ECO:0007669"/>
    <property type="project" value="UniProtKB-SubCell"/>
</dbReference>
<dbReference type="GO" id="GO:0043657">
    <property type="term" value="C:host cell"/>
    <property type="evidence" value="ECO:0007669"/>
    <property type="project" value="UniProtKB-SubCell"/>
</dbReference>
<sequence length="118" mass="13030">MRPFQLLSALAIFINLEAVEAAAYWDCDGTEIPERNVRAAVVLAFNYRKESFHGYPATFIIGSTFSGVGEVRQFPVEDSDANWQGGAVKYYILTNKRGSYLEVFSSVGSGNKCTFVEG</sequence>